<sequence length="229" mass="25873">MGQKVNPIGFRLAVNKDWRSKWYATGQDYATKLHEDLVMRKYIKEQLMSAAVSSIVIERAWNSVRITVHTARPGLVIGRKGEEIEKIRQYLQGLCGASTQVNIDIVEIRSPETDAQLIAENVAVQLERRVSFRRAMKRAVQVAMERGADGIRIRCAGRLGGADIARAEWYREGKVPLQTLRTPIDYGFAEARTLYGIIGVKCWVNKRDEVVSQQNSRPSGPRGPRRPRA</sequence>
<organism>
    <name type="scientific">Akkermansia muciniphila (strain ATCC BAA-835 / DSM 22959 / JCM 33894 / BCRC 81048 / CCUG 64013 / CIP 107961 / Muc)</name>
    <dbReference type="NCBI Taxonomy" id="349741"/>
    <lineage>
        <taxon>Bacteria</taxon>
        <taxon>Pseudomonadati</taxon>
        <taxon>Verrucomicrobiota</taxon>
        <taxon>Verrucomicrobiia</taxon>
        <taxon>Verrucomicrobiales</taxon>
        <taxon>Akkermansiaceae</taxon>
        <taxon>Akkermansia</taxon>
    </lineage>
</organism>
<comment type="function">
    <text evidence="1">Binds the lower part of the 30S subunit head. Binds mRNA in the 70S ribosome, positioning it for translation.</text>
</comment>
<comment type="subunit">
    <text evidence="1">Part of the 30S ribosomal subunit. Forms a tight complex with proteins S10 and S14.</text>
</comment>
<comment type="similarity">
    <text evidence="1">Belongs to the universal ribosomal protein uS3 family.</text>
</comment>
<dbReference type="EMBL" id="CP001071">
    <property type="protein sequence ID" value="ACD04139.1"/>
    <property type="molecule type" value="Genomic_DNA"/>
</dbReference>
<dbReference type="RefSeq" id="WP_012419354.1">
    <property type="nucleotide sequence ID" value="NZ_CP071807.1"/>
</dbReference>
<dbReference type="SMR" id="B2UMT3"/>
<dbReference type="STRING" id="349741.Amuc_0297"/>
<dbReference type="PaxDb" id="349741-Amuc_0297"/>
<dbReference type="GeneID" id="60879775"/>
<dbReference type="KEGG" id="amu:Amuc_0297"/>
<dbReference type="eggNOG" id="COG0092">
    <property type="taxonomic scope" value="Bacteria"/>
</dbReference>
<dbReference type="HOGENOM" id="CLU_058591_0_2_0"/>
<dbReference type="OrthoDB" id="9806396at2"/>
<dbReference type="BioCyc" id="AMUC349741:G1GBX-339-MONOMER"/>
<dbReference type="Proteomes" id="UP000001031">
    <property type="component" value="Chromosome"/>
</dbReference>
<dbReference type="GO" id="GO:0022627">
    <property type="term" value="C:cytosolic small ribosomal subunit"/>
    <property type="evidence" value="ECO:0007669"/>
    <property type="project" value="TreeGrafter"/>
</dbReference>
<dbReference type="GO" id="GO:0003729">
    <property type="term" value="F:mRNA binding"/>
    <property type="evidence" value="ECO:0007669"/>
    <property type="project" value="UniProtKB-UniRule"/>
</dbReference>
<dbReference type="GO" id="GO:0019843">
    <property type="term" value="F:rRNA binding"/>
    <property type="evidence" value="ECO:0007669"/>
    <property type="project" value="UniProtKB-UniRule"/>
</dbReference>
<dbReference type="GO" id="GO:0003735">
    <property type="term" value="F:structural constituent of ribosome"/>
    <property type="evidence" value="ECO:0007669"/>
    <property type="project" value="InterPro"/>
</dbReference>
<dbReference type="GO" id="GO:0006412">
    <property type="term" value="P:translation"/>
    <property type="evidence" value="ECO:0007669"/>
    <property type="project" value="UniProtKB-UniRule"/>
</dbReference>
<dbReference type="CDD" id="cd02412">
    <property type="entry name" value="KH-II_30S_S3"/>
    <property type="match status" value="1"/>
</dbReference>
<dbReference type="FunFam" id="3.30.300.20:FF:000001">
    <property type="entry name" value="30S ribosomal protein S3"/>
    <property type="match status" value="1"/>
</dbReference>
<dbReference type="Gene3D" id="3.30.300.20">
    <property type="match status" value="1"/>
</dbReference>
<dbReference type="Gene3D" id="3.30.1140.32">
    <property type="entry name" value="Ribosomal protein S3, C-terminal domain"/>
    <property type="match status" value="1"/>
</dbReference>
<dbReference type="HAMAP" id="MF_01309_B">
    <property type="entry name" value="Ribosomal_uS3_B"/>
    <property type="match status" value="1"/>
</dbReference>
<dbReference type="InterPro" id="IPR004087">
    <property type="entry name" value="KH_dom"/>
</dbReference>
<dbReference type="InterPro" id="IPR015946">
    <property type="entry name" value="KH_dom-like_a/b"/>
</dbReference>
<dbReference type="InterPro" id="IPR004044">
    <property type="entry name" value="KH_dom_type_2"/>
</dbReference>
<dbReference type="InterPro" id="IPR009019">
    <property type="entry name" value="KH_sf_prok-type"/>
</dbReference>
<dbReference type="InterPro" id="IPR036419">
    <property type="entry name" value="Ribosomal_S3_C_sf"/>
</dbReference>
<dbReference type="InterPro" id="IPR005704">
    <property type="entry name" value="Ribosomal_uS3_bac-typ"/>
</dbReference>
<dbReference type="InterPro" id="IPR001351">
    <property type="entry name" value="Ribosomal_uS3_C"/>
</dbReference>
<dbReference type="InterPro" id="IPR018280">
    <property type="entry name" value="Ribosomal_uS3_CS"/>
</dbReference>
<dbReference type="NCBIfam" id="TIGR01009">
    <property type="entry name" value="rpsC_bact"/>
    <property type="match status" value="1"/>
</dbReference>
<dbReference type="PANTHER" id="PTHR11760">
    <property type="entry name" value="30S/40S RIBOSOMAL PROTEIN S3"/>
    <property type="match status" value="1"/>
</dbReference>
<dbReference type="PANTHER" id="PTHR11760:SF19">
    <property type="entry name" value="SMALL RIBOSOMAL SUBUNIT PROTEIN US3C"/>
    <property type="match status" value="1"/>
</dbReference>
<dbReference type="Pfam" id="PF07650">
    <property type="entry name" value="KH_2"/>
    <property type="match status" value="1"/>
</dbReference>
<dbReference type="Pfam" id="PF00189">
    <property type="entry name" value="Ribosomal_S3_C"/>
    <property type="match status" value="1"/>
</dbReference>
<dbReference type="SMART" id="SM00322">
    <property type="entry name" value="KH"/>
    <property type="match status" value="1"/>
</dbReference>
<dbReference type="SUPFAM" id="SSF54814">
    <property type="entry name" value="Prokaryotic type KH domain (KH-domain type II)"/>
    <property type="match status" value="1"/>
</dbReference>
<dbReference type="SUPFAM" id="SSF54821">
    <property type="entry name" value="Ribosomal protein S3 C-terminal domain"/>
    <property type="match status" value="1"/>
</dbReference>
<dbReference type="PROSITE" id="PS50823">
    <property type="entry name" value="KH_TYPE_2"/>
    <property type="match status" value="1"/>
</dbReference>
<dbReference type="PROSITE" id="PS00548">
    <property type="entry name" value="RIBOSOMAL_S3"/>
    <property type="match status" value="1"/>
</dbReference>
<protein>
    <recommendedName>
        <fullName evidence="1">Small ribosomal subunit protein uS3</fullName>
    </recommendedName>
    <alternativeName>
        <fullName evidence="3">30S ribosomal protein S3</fullName>
    </alternativeName>
</protein>
<keyword id="KW-1185">Reference proteome</keyword>
<keyword id="KW-0687">Ribonucleoprotein</keyword>
<keyword id="KW-0689">Ribosomal protein</keyword>
<keyword id="KW-0694">RNA-binding</keyword>
<keyword id="KW-0699">rRNA-binding</keyword>
<evidence type="ECO:0000255" key="1">
    <source>
        <dbReference type="HAMAP-Rule" id="MF_01309"/>
    </source>
</evidence>
<evidence type="ECO:0000256" key="2">
    <source>
        <dbReference type="SAM" id="MobiDB-lite"/>
    </source>
</evidence>
<evidence type="ECO:0000305" key="3"/>
<gene>
    <name evidence="1" type="primary">rpsC</name>
    <name type="ordered locus">Amuc_0297</name>
</gene>
<name>RS3_AKKM8</name>
<reference key="1">
    <citation type="journal article" date="2011" name="PLoS ONE">
        <title>The genome of Akkermansia muciniphila, a dedicated intestinal mucin degrader, and its use in exploring intestinal metagenomes.</title>
        <authorList>
            <person name="van Passel M.W."/>
            <person name="Kant R."/>
            <person name="Zoetendal E.G."/>
            <person name="Plugge C.M."/>
            <person name="Derrien M."/>
            <person name="Malfatti S.A."/>
            <person name="Chain P.S."/>
            <person name="Woyke T."/>
            <person name="Palva A."/>
            <person name="de Vos W.M."/>
            <person name="Smidt H."/>
        </authorList>
    </citation>
    <scope>NUCLEOTIDE SEQUENCE [LARGE SCALE GENOMIC DNA]</scope>
    <source>
        <strain>ATCC BAA-835 / DSM 22959 / JCM 33894 / BCRC 81048 / CCUG 64013 / CIP 107961 / Muc</strain>
    </source>
</reference>
<accession>B2UMT3</accession>
<proteinExistence type="inferred from homology"/>
<feature type="chain" id="PRO_1000140917" description="Small ribosomal subunit protein uS3">
    <location>
        <begin position="1"/>
        <end position="229"/>
    </location>
</feature>
<feature type="domain" description="KH type-2" evidence="1">
    <location>
        <begin position="39"/>
        <end position="109"/>
    </location>
</feature>
<feature type="region of interest" description="Disordered" evidence="2">
    <location>
        <begin position="210"/>
        <end position="229"/>
    </location>
</feature>